<keyword id="KW-0963">Cytoplasm</keyword>
<keyword id="KW-0653">Protein transport</keyword>
<keyword id="KW-0813">Transport</keyword>
<evidence type="ECO:0000250" key="1"/>
<evidence type="ECO:0000255" key="2">
    <source>
        <dbReference type="PROSITE-ProRule" id="PRU00137"/>
    </source>
</evidence>
<accession>Q9P926</accession>
<dbReference type="EMBL" id="AF145758">
    <property type="protein sequence ID" value="AAF66701.1"/>
    <property type="molecule type" value="Genomic_DNA"/>
</dbReference>
<dbReference type="SMR" id="Q9P926"/>
<dbReference type="EnsemblFungi" id="C1_10100C_A-T">
    <property type="protein sequence ID" value="C1_10100C_A-T-p1"/>
    <property type="gene ID" value="C1_10100C_A"/>
</dbReference>
<dbReference type="CGD" id="CAL0000201779">
    <property type="gene designation" value="NTF2"/>
</dbReference>
<dbReference type="VEuPathDB" id="FungiDB:C1_10100C_A"/>
<dbReference type="VEuPathDB" id="FungiDB:CAWG_00422"/>
<dbReference type="PhylomeDB" id="Q9P926"/>
<dbReference type="GO" id="GO:0005737">
    <property type="term" value="C:cytoplasm"/>
    <property type="evidence" value="ECO:0007669"/>
    <property type="project" value="UniProtKB-SubCell"/>
</dbReference>
<dbReference type="GO" id="GO:0006913">
    <property type="term" value="P:nucleocytoplasmic transport"/>
    <property type="evidence" value="ECO:0007669"/>
    <property type="project" value="InterPro"/>
</dbReference>
<dbReference type="GO" id="GO:0015031">
    <property type="term" value="P:protein transport"/>
    <property type="evidence" value="ECO:0007669"/>
    <property type="project" value="UniProtKB-KW"/>
</dbReference>
<dbReference type="CDD" id="cd00780">
    <property type="entry name" value="NTF2"/>
    <property type="match status" value="1"/>
</dbReference>
<dbReference type="FunFam" id="3.10.450.50:FF:000005">
    <property type="entry name" value="Nuclear transport factor 2"/>
    <property type="match status" value="1"/>
</dbReference>
<dbReference type="Gene3D" id="3.10.450.50">
    <property type="match status" value="1"/>
</dbReference>
<dbReference type="InterPro" id="IPR045875">
    <property type="entry name" value="NTF2"/>
</dbReference>
<dbReference type="InterPro" id="IPR032710">
    <property type="entry name" value="NTF2-like_dom_sf"/>
</dbReference>
<dbReference type="InterPro" id="IPR002075">
    <property type="entry name" value="NTF2_dom"/>
</dbReference>
<dbReference type="InterPro" id="IPR018222">
    <property type="entry name" value="Nuclear_transport_factor_2_euk"/>
</dbReference>
<dbReference type="PANTHER" id="PTHR12612">
    <property type="entry name" value="NUCLEAR TRANSPORT FACTOR 2"/>
    <property type="match status" value="1"/>
</dbReference>
<dbReference type="Pfam" id="PF02136">
    <property type="entry name" value="NTF2"/>
    <property type="match status" value="1"/>
</dbReference>
<dbReference type="SUPFAM" id="SSF54427">
    <property type="entry name" value="NTF2-like"/>
    <property type="match status" value="1"/>
</dbReference>
<dbReference type="PROSITE" id="PS50177">
    <property type="entry name" value="NTF2_DOMAIN"/>
    <property type="match status" value="1"/>
</dbReference>
<proteinExistence type="inferred from homology"/>
<feature type="chain" id="PRO_0000194783" description="Nuclear transport factor 2">
    <location>
        <begin position="1"/>
        <end position="124"/>
    </location>
</feature>
<feature type="domain" description="NTF2" evidence="2">
    <location>
        <begin position="8"/>
        <end position="121"/>
    </location>
</feature>
<name>NTF2_CANAX</name>
<sequence>MSVDFNAVATEFCNFYYNQFDSDRSQLGNLYRNESMLTFETSQLQGARDIVEKLASLPFQKVAHRISTLDAQPASANGDILVMVTGELLIDEEQNAQRYSQVFHLIPDNGSYYVFNDIFRLNYS</sequence>
<comment type="function">
    <text evidence="1">Facilitates protein transport into the nucleus. Could be part of a multicomponent system of cytosolic factors that assemble at the pore complex during nuclear import (By similarity).</text>
</comment>
<comment type="subcellular location">
    <subcellularLocation>
        <location evidence="1">Cytoplasm</location>
    </subcellularLocation>
</comment>
<organism>
    <name type="scientific">Candida albicans</name>
    <name type="common">Yeast</name>
    <dbReference type="NCBI Taxonomy" id="5476"/>
    <lineage>
        <taxon>Eukaryota</taxon>
        <taxon>Fungi</taxon>
        <taxon>Dikarya</taxon>
        <taxon>Ascomycota</taxon>
        <taxon>Saccharomycotina</taxon>
        <taxon>Pichiomycetes</taxon>
        <taxon>Debaryomycetaceae</taxon>
        <taxon>Candida/Lodderomyces clade</taxon>
        <taxon>Candida</taxon>
    </lineage>
</organism>
<reference key="1">
    <citation type="submission" date="1999-04" db="EMBL/GenBank/DDBJ databases">
        <title>Sequence of Candida albicans and Yarrowia lipolytica homolog of the Saccharomyces cerevisiae NTF2 gene.</title>
        <authorList>
            <person name="Blanchin-Roland S."/>
            <person name="Cordero-Otero R."/>
            <person name="Gaillardin C."/>
            <person name="Herrero A.B."/>
            <person name="Dominguez A."/>
        </authorList>
    </citation>
    <scope>NUCLEOTIDE SEQUENCE [GENOMIC DNA]</scope>
    <source>
        <strain>ATCC 26555</strain>
    </source>
</reference>
<gene>
    <name type="primary">NTF2</name>
</gene>
<protein>
    <recommendedName>
        <fullName>Nuclear transport factor 2</fullName>
        <shortName>NTF-2</shortName>
    </recommendedName>
</protein>